<feature type="peptide" id="PRO_0000043439" description="RO-1">
    <location>
        <begin position="1"/>
        <end position="10"/>
    </location>
</feature>
<feature type="modified residue" description="Pyrrolidone carboxylic acid" evidence="1">
    <location>
        <position position="1"/>
    </location>
</feature>
<feature type="modified residue" description="Threonine amide" evidence="1">
    <location>
        <position position="10"/>
    </location>
</feature>
<keyword id="KW-0027">Amidation</keyword>
<keyword id="KW-0903">Direct protein sequencing</keyword>
<keyword id="KW-0286">Flight</keyword>
<keyword id="KW-0372">Hormone</keyword>
<keyword id="KW-0527">Neuropeptide</keyword>
<keyword id="KW-0873">Pyrrolidone carboxylic acid</keyword>
<keyword id="KW-0964">Secreted</keyword>
<accession>P18110</accession>
<protein>
    <recommendedName>
        <fullName>RO-1</fullName>
    </recommendedName>
    <alternativeName>
        <fullName>Hypertrehalosaemic factor</fullName>
    </alternativeName>
    <alternativeName>
        <fullName>RO I</fullName>
    </alternativeName>
</protein>
<evidence type="ECO:0000269" key="1">
    <source>
    </source>
</evidence>
<evidence type="ECO:0000305" key="2"/>
<sequence>QVNFTPNWGT</sequence>
<dbReference type="GO" id="GO:0005576">
    <property type="term" value="C:extracellular region"/>
    <property type="evidence" value="ECO:0007669"/>
    <property type="project" value="UniProtKB-SubCell"/>
</dbReference>
<dbReference type="GO" id="GO:0005179">
    <property type="term" value="F:hormone activity"/>
    <property type="evidence" value="ECO:0007669"/>
    <property type="project" value="UniProtKB-KW"/>
</dbReference>
<dbReference type="GO" id="GO:0007629">
    <property type="term" value="P:flight behavior"/>
    <property type="evidence" value="ECO:0007669"/>
    <property type="project" value="UniProtKB-KW"/>
</dbReference>
<dbReference type="GO" id="GO:0007218">
    <property type="term" value="P:neuropeptide signaling pathway"/>
    <property type="evidence" value="ECO:0007669"/>
    <property type="project" value="UniProtKB-KW"/>
</dbReference>
<dbReference type="InterPro" id="IPR002047">
    <property type="entry name" value="Adipokinetic_hormone_CS"/>
</dbReference>
<dbReference type="PROSITE" id="PS00256">
    <property type="entry name" value="AKH"/>
    <property type="match status" value="1"/>
</dbReference>
<reference key="1">
    <citation type="journal article" date="1988" name="Peptides">
        <title>Sequence analyses of two neuropeptides of the AKH/RPCH-family from the lubber grasshopper, Romalea microptera.</title>
        <authorList>
            <person name="Gaede G."/>
            <person name="Hilbich C."/>
            <person name="Beyreuther K."/>
            <person name="Rinehart K.L. Jr."/>
        </authorList>
    </citation>
    <scope>PROTEIN SEQUENCE</scope>
    <scope>PYROGLUTAMATE FORMATION AT GLN-1</scope>
    <scope>AMIDATION AT THR-10</scope>
    <source>
        <tissue>Corpora cardiaca</tissue>
    </source>
</reference>
<comment type="function">
    <text>Hypertrehalosaemic factors are neuropeptides that elevate the level of trehalose in the hemolymph (trehalose is the major carbohydrate in the hemolymph of insects).</text>
</comment>
<comment type="subcellular location">
    <subcellularLocation>
        <location>Secreted</location>
    </subcellularLocation>
</comment>
<comment type="similarity">
    <text evidence="2">Belongs to the AKH/HRTH/RPCH family.</text>
</comment>
<organism>
    <name type="scientific">Romalea microptera</name>
    <name type="common">Eastern lubber grasshopper</name>
    <name type="synonym">Romalea guttata</name>
    <dbReference type="NCBI Taxonomy" id="7007"/>
    <lineage>
        <taxon>Eukaryota</taxon>
        <taxon>Metazoa</taxon>
        <taxon>Ecdysozoa</taxon>
        <taxon>Arthropoda</taxon>
        <taxon>Hexapoda</taxon>
        <taxon>Insecta</taxon>
        <taxon>Pterygota</taxon>
        <taxon>Neoptera</taxon>
        <taxon>Polyneoptera</taxon>
        <taxon>Orthoptera</taxon>
        <taxon>Caelifera</taxon>
        <taxon>Acrididea</taxon>
        <taxon>Acridomorpha</taxon>
        <taxon>Acridoidea</taxon>
        <taxon>Romaleidae</taxon>
        <taxon>Romaleinae</taxon>
        <taxon>Romalea</taxon>
    </lineage>
</organism>
<name>HTF1_ROMMI</name>
<proteinExistence type="evidence at protein level"/>